<gene>
    <name type="ORF">BLLF2</name>
</gene>
<organismHost>
    <name type="scientific">Homo sapiens</name>
    <name type="common">Human</name>
    <dbReference type="NCBI Taxonomy" id="9606"/>
</organismHost>
<accession>P03199</accession>
<accession>Q777E9</accession>
<dbReference type="EMBL" id="V01555">
    <property type="protein sequence ID" value="CAA24853.1"/>
    <property type="molecule type" value="Genomic_DNA"/>
</dbReference>
<dbReference type="EMBL" id="AJ507799">
    <property type="protein sequence ID" value="CAD53418.1"/>
    <property type="molecule type" value="Genomic_DNA"/>
</dbReference>
<dbReference type="PIR" id="H43041">
    <property type="entry name" value="QQBE20"/>
</dbReference>
<dbReference type="RefSeq" id="YP_401668.1">
    <property type="nucleotide sequence ID" value="NC_007605.1"/>
</dbReference>
<dbReference type="IntAct" id="P03199">
    <property type="interactions" value="10"/>
</dbReference>
<dbReference type="MINT" id="P03199"/>
<dbReference type="DNASU" id="3783714"/>
<dbReference type="GeneID" id="3783714"/>
<dbReference type="KEGG" id="vg:3783714"/>
<dbReference type="Proteomes" id="UP000153037">
    <property type="component" value="Segment"/>
</dbReference>
<dbReference type="InterPro" id="IPR035221">
    <property type="entry name" value="DUF5451"/>
</dbReference>
<dbReference type="Pfam" id="PF17532">
    <property type="entry name" value="DUF5451"/>
    <property type="match status" value="1"/>
</dbReference>
<feature type="chain" id="PRO_0000116274" description="Uncharacterized protein BLLF2">
    <location>
        <begin position="1"/>
        <end position="148"/>
    </location>
</feature>
<feature type="region of interest" description="Disordered" evidence="1">
    <location>
        <begin position="1"/>
        <end position="86"/>
    </location>
</feature>
<feature type="region of interest" description="Disordered" evidence="1">
    <location>
        <begin position="122"/>
        <end position="148"/>
    </location>
</feature>
<feature type="compositionally biased region" description="Basic residues" evidence="1">
    <location>
        <begin position="38"/>
        <end position="57"/>
    </location>
</feature>
<feature type="compositionally biased region" description="Polar residues" evidence="1">
    <location>
        <begin position="134"/>
        <end position="148"/>
    </location>
</feature>
<name>BLLF2_EBVB9</name>
<evidence type="ECO:0000256" key="1">
    <source>
        <dbReference type="SAM" id="MobiDB-lite"/>
    </source>
</evidence>
<evidence type="ECO:0000305" key="2"/>
<protein>
    <recommendedName>
        <fullName>Uncharacterized protein BLLF2</fullName>
    </recommendedName>
</protein>
<proteinExistence type="inferred from homology"/>
<reference key="1">
    <citation type="journal article" date="1984" name="Nature">
        <title>DNA sequence and expression of the B95-8 Epstein-Barr virus genome.</title>
        <authorList>
            <person name="Baer R."/>
            <person name="Bankier A.T."/>
            <person name="Biggin M.D."/>
            <person name="Deininger P.L."/>
            <person name="Farrell P.J."/>
            <person name="Gibson T.J."/>
            <person name="Hatfull G."/>
            <person name="Hudson G.S."/>
            <person name="Satchwell S.C."/>
            <person name="Seguin C."/>
            <person name="Tuffnell P.S."/>
            <person name="Barrell B.G."/>
        </authorList>
    </citation>
    <scope>NUCLEOTIDE SEQUENCE [LARGE SCALE GENOMIC DNA]</scope>
</reference>
<reference key="2">
    <citation type="journal article" date="2003" name="Virology">
        <title>Updated Epstein-Barr virus (EBV) DNA sequence and analysis of a promoter for the BART (CST, BARF0) RNAs of EBV.</title>
        <authorList>
            <person name="de Jesus O."/>
            <person name="Smith P.R."/>
            <person name="Spender L.C."/>
            <person name="Elgueta Karstegl C."/>
            <person name="Niller H.H."/>
            <person name="Huang D."/>
            <person name="Farrell P.J."/>
        </authorList>
    </citation>
    <scope>GENOME REANNOTATION</scope>
</reference>
<keyword id="KW-0244">Early protein</keyword>
<keyword id="KW-1185">Reference proteome</keyword>
<sequence>MCPPVRQHPAQAPPAKRQALETVPHPQNRGRLMSPKARPPKMQRRPRPPVAKRRRFPRSPQQVERPILPPVESTPQDMEPGQVQSPPQITAVIQLRQDRDTMRPPIYLPALLANCGPAGLLRAHRLPQPKPPCQSRQRPSPDSQTSPC</sequence>
<comment type="similarity">
    <text evidence="2">Belongs to the Epstein-Barr virus BLLF2 family.</text>
</comment>
<comment type="caution">
    <text evidence="2">BLLF2 is known as BLLF3 in PubMed:6087149.</text>
</comment>
<organism>
    <name type="scientific">Epstein-Barr virus (strain B95-8)</name>
    <name type="common">HHV-4</name>
    <name type="synonym">Human herpesvirus 4</name>
    <dbReference type="NCBI Taxonomy" id="10377"/>
    <lineage>
        <taxon>Viruses</taxon>
        <taxon>Duplodnaviria</taxon>
        <taxon>Heunggongvirae</taxon>
        <taxon>Peploviricota</taxon>
        <taxon>Herviviricetes</taxon>
        <taxon>Herpesvirales</taxon>
        <taxon>Orthoherpesviridae</taxon>
        <taxon>Gammaherpesvirinae</taxon>
        <taxon>Lymphocryptovirus</taxon>
        <taxon>Lymphocryptovirus humangamma4</taxon>
        <taxon>Epstein-Barr virus (strain GD1)</taxon>
    </lineage>
</organism>